<name>METAA_METII</name>
<dbReference type="EC" id="2.3.1.31" evidence="1 2"/>
<dbReference type="EMBL" id="CP005934">
    <property type="protein sequence ID" value="AGN26470.1"/>
    <property type="molecule type" value="Genomic_DNA"/>
</dbReference>
<dbReference type="RefSeq" id="WP_020448995.1">
    <property type="nucleotide sequence ID" value="NC_021353.1"/>
</dbReference>
<dbReference type="SMR" id="R9T6W8"/>
<dbReference type="STRING" id="1295009.MMINT_11300"/>
<dbReference type="GeneID" id="41323527"/>
<dbReference type="KEGG" id="mer:MMINT_11300"/>
<dbReference type="HOGENOM" id="CLU_057851_0_1_2"/>
<dbReference type="InParanoid" id="R9T6W8"/>
<dbReference type="OrthoDB" id="52471at2157"/>
<dbReference type="UniPathway" id="UPA00051">
    <property type="reaction ID" value="UER00074"/>
</dbReference>
<dbReference type="Proteomes" id="UP000014070">
    <property type="component" value="Chromosome"/>
</dbReference>
<dbReference type="GO" id="GO:0005737">
    <property type="term" value="C:cytoplasm"/>
    <property type="evidence" value="ECO:0007669"/>
    <property type="project" value="UniProtKB-SubCell"/>
</dbReference>
<dbReference type="GO" id="GO:0004414">
    <property type="term" value="F:homoserine O-acetyltransferase activity"/>
    <property type="evidence" value="ECO:0007669"/>
    <property type="project" value="UniProtKB-EC"/>
</dbReference>
<dbReference type="GO" id="GO:0008899">
    <property type="term" value="F:homoserine O-succinyltransferase activity"/>
    <property type="evidence" value="ECO:0007669"/>
    <property type="project" value="InterPro"/>
</dbReference>
<dbReference type="GO" id="GO:0009086">
    <property type="term" value="P:methionine biosynthetic process"/>
    <property type="evidence" value="ECO:0007669"/>
    <property type="project" value="UniProtKB-KW"/>
</dbReference>
<dbReference type="CDD" id="cd03131">
    <property type="entry name" value="GATase1_HTS"/>
    <property type="match status" value="1"/>
</dbReference>
<dbReference type="FunFam" id="3.40.50.880:FF:000004">
    <property type="entry name" value="Homoserine O-succinyltransferase"/>
    <property type="match status" value="1"/>
</dbReference>
<dbReference type="Gene3D" id="3.40.50.880">
    <property type="match status" value="1"/>
</dbReference>
<dbReference type="HAMAP" id="MF_00295">
    <property type="entry name" value="MetA_acyltransf"/>
    <property type="match status" value="1"/>
</dbReference>
<dbReference type="InterPro" id="IPR029062">
    <property type="entry name" value="Class_I_gatase-like"/>
</dbReference>
<dbReference type="InterPro" id="IPR005697">
    <property type="entry name" value="HST_MetA"/>
</dbReference>
<dbReference type="InterPro" id="IPR033752">
    <property type="entry name" value="MetA_family"/>
</dbReference>
<dbReference type="NCBIfam" id="TIGR01001">
    <property type="entry name" value="metA"/>
    <property type="match status" value="1"/>
</dbReference>
<dbReference type="PANTHER" id="PTHR20919">
    <property type="entry name" value="HOMOSERINE O-SUCCINYLTRANSFERASE"/>
    <property type="match status" value="1"/>
</dbReference>
<dbReference type="PANTHER" id="PTHR20919:SF0">
    <property type="entry name" value="HOMOSERINE O-SUCCINYLTRANSFERASE"/>
    <property type="match status" value="1"/>
</dbReference>
<dbReference type="Pfam" id="PF04204">
    <property type="entry name" value="HTS"/>
    <property type="match status" value="1"/>
</dbReference>
<dbReference type="PIRSF" id="PIRSF000450">
    <property type="entry name" value="H_ser_succinyltr"/>
    <property type="match status" value="1"/>
</dbReference>
<dbReference type="SUPFAM" id="SSF52317">
    <property type="entry name" value="Class I glutamine amidotransferase-like"/>
    <property type="match status" value="1"/>
</dbReference>
<proteinExistence type="evidence at protein level"/>
<accession>R9T6W8</accession>
<comment type="function">
    <text evidence="1 2">Transfers an acetyl group from acetyl-CoA to L-homoserine, forming acetyl-L-homoserine.</text>
</comment>
<comment type="catalytic activity">
    <reaction evidence="1 2">
        <text>L-homoserine + acetyl-CoA = O-acetyl-L-homoserine + CoA</text>
        <dbReference type="Rhea" id="RHEA:13701"/>
        <dbReference type="ChEBI" id="CHEBI:57287"/>
        <dbReference type="ChEBI" id="CHEBI:57288"/>
        <dbReference type="ChEBI" id="CHEBI:57476"/>
        <dbReference type="ChEBI" id="CHEBI:57716"/>
        <dbReference type="EC" id="2.3.1.31"/>
    </reaction>
</comment>
<comment type="pathway">
    <text evidence="1">Amino-acid biosynthesis; L-methionine biosynthesis via de novo pathway; O-acetyl-L-homoserine from L-homoserine: step 1/1.</text>
</comment>
<comment type="subcellular location">
    <subcellularLocation>
        <location evidence="1">Cytoplasm</location>
    </subcellularLocation>
</comment>
<comment type="similarity">
    <text evidence="1">Belongs to the MetA family.</text>
</comment>
<evidence type="ECO:0000255" key="1">
    <source>
        <dbReference type="HAMAP-Rule" id="MF_00295"/>
    </source>
</evidence>
<evidence type="ECO:0000269" key="2">
    <source>
    </source>
</evidence>
<evidence type="ECO:0000303" key="3">
    <source>
    </source>
</evidence>
<evidence type="ECO:0000312" key="4">
    <source>
        <dbReference type="EMBL" id="AGN26470.1"/>
    </source>
</evidence>
<organism>
    <name type="scientific">Methanomassiliicoccus intestinalis (strain Issoire-Mx1)</name>
    <dbReference type="NCBI Taxonomy" id="1295009"/>
    <lineage>
        <taxon>Archaea</taxon>
        <taxon>Methanobacteriati</taxon>
        <taxon>Thermoplasmatota</taxon>
        <taxon>Thermoplasmata</taxon>
        <taxon>Methanomassiliicoccales</taxon>
        <taxon>Methanomassiliicoccaceae</taxon>
        <taxon>Methanomassiliicoccus</taxon>
    </lineage>
</organism>
<protein>
    <recommendedName>
        <fullName evidence="1">Homoserine O-acetyltransferase</fullName>
        <shortName evidence="1 3">HAT</shortName>
        <ecNumber evidence="1 2">2.3.1.31</ecNumber>
    </recommendedName>
    <alternativeName>
        <fullName evidence="1">Homoserine transacetylase</fullName>
        <shortName evidence="1">HTA</shortName>
    </alternativeName>
</protein>
<keyword id="KW-0012">Acyltransferase</keyword>
<keyword id="KW-0028">Amino-acid biosynthesis</keyword>
<keyword id="KW-0963">Cytoplasm</keyword>
<keyword id="KW-0486">Methionine biosynthesis</keyword>
<keyword id="KW-1185">Reference proteome</keyword>
<keyword id="KW-0808">Transferase</keyword>
<reference key="1">
    <citation type="journal article" date="2013" name="Genome Announc.">
        <title>Genome sequence of 'Candidatus Methanomassiliicoccus intestinalis' Issoire-Mx1, a third thermoplasmatales-related methanogenic archaeon from human feces.</title>
        <authorList>
            <person name="Borrel G."/>
            <person name="Harris H.M."/>
            <person name="Parisot N."/>
            <person name="Gaci N."/>
            <person name="Tottey W."/>
            <person name="Mihajlovski A."/>
            <person name="Deane J."/>
            <person name="Gribaldo S."/>
            <person name="Bardot O."/>
            <person name="Peyretaillade E."/>
            <person name="Peyret P."/>
            <person name="O'Toole P.W."/>
            <person name="Brugere J.F."/>
        </authorList>
    </citation>
    <scope>NUCLEOTIDE SEQUENCE [LARGE SCALE GENOMIC DNA]</scope>
    <source>
        <strain>Issoire-Mx1</strain>
    </source>
</reference>
<reference key="2">
    <citation type="journal article" date="2017" name="Nat. Chem. Biol.">
        <title>Parallel evolution of non-homologous isofunctional enzymes in methionine biosynthesis.</title>
        <authorList>
            <person name="Bastard K."/>
            <person name="Perret A."/>
            <person name="Mariage A."/>
            <person name="Bessonnet T."/>
            <person name="Pinet-Turpault A."/>
            <person name="Petit J.L."/>
            <person name="Darii E."/>
            <person name="Bazire P."/>
            <person name="Vergne-Vaxelaire C."/>
            <person name="Brewee C."/>
            <person name="Debard A."/>
            <person name="Pellouin V."/>
            <person name="Besnard-Gonnet M."/>
            <person name="Artiguenave F."/>
            <person name="Medigue C."/>
            <person name="Vallenet D."/>
            <person name="Danchin A."/>
            <person name="Zaparucha A."/>
            <person name="Weissenbach J."/>
            <person name="Salanoubat M."/>
            <person name="de Berardinis V."/>
        </authorList>
    </citation>
    <scope>FUNCTION</scope>
    <scope>CATALYTIC ACTIVITY</scope>
</reference>
<feature type="chain" id="PRO_0000440345" description="Homoserine O-acetyltransferase">
    <location>
        <begin position="1"/>
        <end position="305"/>
    </location>
</feature>
<feature type="active site" description="Acyl-thioester intermediate" evidence="1">
    <location>
        <position position="142"/>
    </location>
</feature>
<feature type="active site" description="Proton acceptor" evidence="1">
    <location>
        <position position="233"/>
    </location>
</feature>
<feature type="active site" evidence="1">
    <location>
        <position position="235"/>
    </location>
</feature>
<feature type="binding site" evidence="1">
    <location>
        <position position="163"/>
    </location>
    <ligand>
        <name>substrate</name>
    </ligand>
</feature>
<feature type="binding site" evidence="1">
    <location>
        <position position="192"/>
    </location>
    <ligand>
        <name>substrate</name>
    </ligand>
</feature>
<feature type="binding site" evidence="1">
    <location>
        <position position="247"/>
    </location>
    <ligand>
        <name>substrate</name>
    </ligand>
</feature>
<feature type="site" description="Important for acyl-CoA specificity" evidence="1">
    <location>
        <position position="111"/>
    </location>
</feature>
<feature type="site" description="Important for substrate specificity" evidence="1">
    <location>
        <position position="192"/>
    </location>
</feature>
<gene>
    <name evidence="1 3" type="primary">metAA</name>
    <name evidence="4" type="ORF">MMINT_11300</name>
</gene>
<sequence>MPINIPDDLPAASILESEKIFVMNENRARHQDIRPLEILIFNLMPSKVETETQILRLLSNSPIQIDIDLLRTETYISKHTSQDYLQHFYKTFNEIKNKKYDGMIITGAPVENMPYESVKYWKEFCEILDWSLTNSFSTMHICWGALAALYYHYGIPKHPLDEKISGIYAHVPLEYYHPLLRGFDDVFYMPHSRYMTVKESDLKGDLKVLARSEETGPAIIMSDKLRQVFVTGHLEYDTMTLANEYKRDLEKGLHPVIPENYFPDNDPNAAPKKLWRSHASLLFSNWLNYYVYQQTPYDLLKIGRS</sequence>